<feature type="chain" id="PRO_1000099083" description="GTPase Der">
    <location>
        <begin position="1"/>
        <end position="449"/>
    </location>
</feature>
<feature type="domain" description="EngA-type G 1">
    <location>
        <begin position="3"/>
        <end position="167"/>
    </location>
</feature>
<feature type="domain" description="EngA-type G 2">
    <location>
        <begin position="178"/>
        <end position="351"/>
    </location>
</feature>
<feature type="domain" description="KH-like" evidence="1">
    <location>
        <begin position="352"/>
        <end position="436"/>
    </location>
</feature>
<feature type="binding site" evidence="1">
    <location>
        <begin position="9"/>
        <end position="16"/>
    </location>
    <ligand>
        <name>GTP</name>
        <dbReference type="ChEBI" id="CHEBI:37565"/>
        <label>1</label>
    </ligand>
</feature>
<feature type="binding site" evidence="1">
    <location>
        <begin position="56"/>
        <end position="60"/>
    </location>
    <ligand>
        <name>GTP</name>
        <dbReference type="ChEBI" id="CHEBI:37565"/>
        <label>1</label>
    </ligand>
</feature>
<feature type="binding site" evidence="1">
    <location>
        <begin position="119"/>
        <end position="122"/>
    </location>
    <ligand>
        <name>GTP</name>
        <dbReference type="ChEBI" id="CHEBI:37565"/>
        <label>1</label>
    </ligand>
</feature>
<feature type="binding site" evidence="1">
    <location>
        <begin position="184"/>
        <end position="191"/>
    </location>
    <ligand>
        <name>GTP</name>
        <dbReference type="ChEBI" id="CHEBI:37565"/>
        <label>2</label>
    </ligand>
</feature>
<feature type="binding site" evidence="1">
    <location>
        <begin position="231"/>
        <end position="235"/>
    </location>
    <ligand>
        <name>GTP</name>
        <dbReference type="ChEBI" id="CHEBI:37565"/>
        <label>2</label>
    </ligand>
</feature>
<feature type="binding site" evidence="1">
    <location>
        <begin position="296"/>
        <end position="299"/>
    </location>
    <ligand>
        <name>GTP</name>
        <dbReference type="ChEBI" id="CHEBI:37565"/>
        <label>2</label>
    </ligand>
</feature>
<reference key="1">
    <citation type="submission" date="2008-08" db="EMBL/GenBank/DDBJ databases">
        <title>Complete sequence of Acidithiobacillus ferrooxidans ATCC 53993.</title>
        <authorList>
            <person name="Lucas S."/>
            <person name="Copeland A."/>
            <person name="Lapidus A."/>
            <person name="Glavina del Rio T."/>
            <person name="Dalin E."/>
            <person name="Tice H."/>
            <person name="Bruce D."/>
            <person name="Goodwin L."/>
            <person name="Pitluck S."/>
            <person name="Sims D."/>
            <person name="Brettin T."/>
            <person name="Detter J.C."/>
            <person name="Han C."/>
            <person name="Kuske C.R."/>
            <person name="Larimer F."/>
            <person name="Land M."/>
            <person name="Hauser L."/>
            <person name="Kyrpides N."/>
            <person name="Lykidis A."/>
            <person name="Borole A.P."/>
        </authorList>
    </citation>
    <scope>NUCLEOTIDE SEQUENCE [LARGE SCALE GENOMIC DNA]</scope>
    <source>
        <strain>ATCC 53993 / BNL-5-31</strain>
    </source>
</reference>
<comment type="function">
    <text evidence="1">GTPase that plays an essential role in the late steps of ribosome biogenesis.</text>
</comment>
<comment type="subunit">
    <text evidence="1">Associates with the 50S ribosomal subunit.</text>
</comment>
<comment type="similarity">
    <text evidence="1">Belongs to the TRAFAC class TrmE-Era-EngA-EngB-Septin-like GTPase superfamily. EngA (Der) GTPase family.</text>
</comment>
<organism>
    <name type="scientific">Acidithiobacillus ferrooxidans (strain ATCC 53993 / BNL-5-31)</name>
    <name type="common">Leptospirillum ferrooxidans (ATCC 53993)</name>
    <dbReference type="NCBI Taxonomy" id="380394"/>
    <lineage>
        <taxon>Bacteria</taxon>
        <taxon>Pseudomonadati</taxon>
        <taxon>Pseudomonadota</taxon>
        <taxon>Acidithiobacillia</taxon>
        <taxon>Acidithiobacillales</taxon>
        <taxon>Acidithiobacillaceae</taxon>
        <taxon>Acidithiobacillus</taxon>
    </lineage>
</organism>
<accession>B5EJF7</accession>
<keyword id="KW-0342">GTP-binding</keyword>
<keyword id="KW-0547">Nucleotide-binding</keyword>
<keyword id="KW-0677">Repeat</keyword>
<keyword id="KW-0690">Ribosome biogenesis</keyword>
<gene>
    <name evidence="1" type="primary">der</name>
    <name type="synonym">engA</name>
    <name type="ordered locus">Lferr_1609</name>
</gene>
<sequence length="449" mass="49847">MTAVIALVGRPNVGKSTFFNRLTRTREALVADLPGLTRDRHYGTAQFEGRQYLVVDTGGFEPEEREGLVAAMAAQTRLAITEADAICFLVDAKEGLSTQDAEIAQELRRGGKPIYLVVNKMDAKGAVSELPEFYRLGLGTPYTISAAHGHGVEPLLEAIFSDLPTSEDDTADAARKGPRIAMLGRPNVGKSTLVNTMLGEKRVLVFDEPGTTRDSIRIPYERQGKPYVMIDTAGMRRRARVGEGLEKLSVLKTLSALREADVVLLVLDARLGIAEQDAHLVGVAVELGRPIVVVVNKWDGMTPEERKAVKQELERRLDFIRYAPVYTISALHGTGVGDLYKSIDQLWIDSRRHFSTAELNRALADVIETHQPPMVGGRRIKLRYCHQGGENPITLVFHGNQLTRLPGTYKRYLESAFRRALHLEAVPLRLVFRQGENPYDPQPKNGRQH</sequence>
<protein>
    <recommendedName>
        <fullName evidence="1">GTPase Der</fullName>
    </recommendedName>
    <alternativeName>
        <fullName evidence="1">GTP-binding protein EngA</fullName>
    </alternativeName>
</protein>
<proteinExistence type="inferred from homology"/>
<evidence type="ECO:0000255" key="1">
    <source>
        <dbReference type="HAMAP-Rule" id="MF_00195"/>
    </source>
</evidence>
<dbReference type="EMBL" id="CP001132">
    <property type="protein sequence ID" value="ACH83831.1"/>
    <property type="molecule type" value="Genomic_DNA"/>
</dbReference>
<dbReference type="RefSeq" id="WP_012536849.1">
    <property type="nucleotide sequence ID" value="NC_011206.1"/>
</dbReference>
<dbReference type="SMR" id="B5EJF7"/>
<dbReference type="GeneID" id="65281090"/>
<dbReference type="KEGG" id="afe:Lferr_1609"/>
<dbReference type="eggNOG" id="COG1160">
    <property type="taxonomic scope" value="Bacteria"/>
</dbReference>
<dbReference type="HOGENOM" id="CLU_016077_6_2_6"/>
<dbReference type="GO" id="GO:0005525">
    <property type="term" value="F:GTP binding"/>
    <property type="evidence" value="ECO:0007669"/>
    <property type="project" value="UniProtKB-UniRule"/>
</dbReference>
<dbReference type="GO" id="GO:0043022">
    <property type="term" value="F:ribosome binding"/>
    <property type="evidence" value="ECO:0007669"/>
    <property type="project" value="TreeGrafter"/>
</dbReference>
<dbReference type="GO" id="GO:0042254">
    <property type="term" value="P:ribosome biogenesis"/>
    <property type="evidence" value="ECO:0007669"/>
    <property type="project" value="UniProtKB-KW"/>
</dbReference>
<dbReference type="CDD" id="cd01894">
    <property type="entry name" value="EngA1"/>
    <property type="match status" value="1"/>
</dbReference>
<dbReference type="CDD" id="cd01895">
    <property type="entry name" value="EngA2"/>
    <property type="match status" value="1"/>
</dbReference>
<dbReference type="FunFam" id="3.30.300.20:FF:000004">
    <property type="entry name" value="GTPase Der"/>
    <property type="match status" value="1"/>
</dbReference>
<dbReference type="FunFam" id="3.40.50.300:FF:000040">
    <property type="entry name" value="GTPase Der"/>
    <property type="match status" value="1"/>
</dbReference>
<dbReference type="FunFam" id="3.40.50.300:FF:000057">
    <property type="entry name" value="GTPase Der"/>
    <property type="match status" value="1"/>
</dbReference>
<dbReference type="Gene3D" id="3.30.300.20">
    <property type="match status" value="1"/>
</dbReference>
<dbReference type="Gene3D" id="3.40.50.300">
    <property type="entry name" value="P-loop containing nucleotide triphosphate hydrolases"/>
    <property type="match status" value="2"/>
</dbReference>
<dbReference type="HAMAP" id="MF_00195">
    <property type="entry name" value="GTPase_Der"/>
    <property type="match status" value="1"/>
</dbReference>
<dbReference type="InterPro" id="IPR031166">
    <property type="entry name" value="G_ENGA"/>
</dbReference>
<dbReference type="InterPro" id="IPR006073">
    <property type="entry name" value="GTP-bd"/>
</dbReference>
<dbReference type="InterPro" id="IPR016484">
    <property type="entry name" value="GTPase_Der"/>
</dbReference>
<dbReference type="InterPro" id="IPR032859">
    <property type="entry name" value="KH_dom-like"/>
</dbReference>
<dbReference type="InterPro" id="IPR015946">
    <property type="entry name" value="KH_dom-like_a/b"/>
</dbReference>
<dbReference type="InterPro" id="IPR027417">
    <property type="entry name" value="P-loop_NTPase"/>
</dbReference>
<dbReference type="InterPro" id="IPR005225">
    <property type="entry name" value="Small_GTP-bd"/>
</dbReference>
<dbReference type="NCBIfam" id="TIGR03594">
    <property type="entry name" value="GTPase_EngA"/>
    <property type="match status" value="1"/>
</dbReference>
<dbReference type="NCBIfam" id="TIGR00231">
    <property type="entry name" value="small_GTP"/>
    <property type="match status" value="2"/>
</dbReference>
<dbReference type="PANTHER" id="PTHR43834">
    <property type="entry name" value="GTPASE DER"/>
    <property type="match status" value="1"/>
</dbReference>
<dbReference type="PANTHER" id="PTHR43834:SF6">
    <property type="entry name" value="GTPASE DER"/>
    <property type="match status" value="1"/>
</dbReference>
<dbReference type="Pfam" id="PF14714">
    <property type="entry name" value="KH_dom-like"/>
    <property type="match status" value="1"/>
</dbReference>
<dbReference type="Pfam" id="PF01926">
    <property type="entry name" value="MMR_HSR1"/>
    <property type="match status" value="2"/>
</dbReference>
<dbReference type="PIRSF" id="PIRSF006485">
    <property type="entry name" value="GTP-binding_EngA"/>
    <property type="match status" value="1"/>
</dbReference>
<dbReference type="PRINTS" id="PR00326">
    <property type="entry name" value="GTP1OBG"/>
</dbReference>
<dbReference type="SUPFAM" id="SSF52540">
    <property type="entry name" value="P-loop containing nucleoside triphosphate hydrolases"/>
    <property type="match status" value="2"/>
</dbReference>
<dbReference type="PROSITE" id="PS51712">
    <property type="entry name" value="G_ENGA"/>
    <property type="match status" value="2"/>
</dbReference>
<name>DER_ACIF5</name>